<keyword id="KW-0963">Cytoplasm</keyword>
<keyword id="KW-0227">DNA damage</keyword>
<keyword id="KW-0228">DNA excision</keyword>
<keyword id="KW-0234">DNA repair</keyword>
<keyword id="KW-0267">Excision nuclease</keyword>
<keyword id="KW-0742">SOS response</keyword>
<feature type="chain" id="PRO_0000138341" description="UvrABC system protein C">
    <location>
        <begin position="1"/>
        <end position="593"/>
    </location>
</feature>
<feature type="domain" description="GIY-YIG" evidence="1">
    <location>
        <begin position="17"/>
        <end position="94"/>
    </location>
</feature>
<feature type="domain" description="UVR" evidence="1">
    <location>
        <begin position="199"/>
        <end position="234"/>
    </location>
</feature>
<proteinExistence type="inferred from homology"/>
<gene>
    <name evidence="1" type="primary">uvrC</name>
</gene>
<sequence>MEDYKKRIKNKLNVVPMEPGCYLMKDRNDQVIYVGKAKKLRNRLRSYFTGAHDAKTTRLVGEIRRFEFIVTSSETESLLLELNLIKQYQPRYNILLKDDKSYPFIKITKEKYPRLLVTRTVKQGTGKYFGPYPNAYSAQETKKLLDRIYPYRKCDKMPDKLCLYYHIGQCLGPCVYDVDLSKYAQMTKEITDFLNGEDKTILKSLEERMLTASESLDFERAKEYRDLIQHIQNLTNKQKIMSSDKTIRDVFGYSVDKGWMCIQVFFIRQGNMIKRDTTMIPLQQTEEEEFYTFIGQFYSLNQHILPKEVHVPRNLDKEMIQSVVDTKIVQPARGPKKDMVDLAAHNAKVSLNNKFELISRDESRTIKAIEELGTQMGIQTPIRIEAFDNSNIQGVDPVSAMVTFVDGKPDKKNYRKYKIKTVKGPDDYKSMREVVRRRYSRVLNEGLPLPDLIIVDGGKGHMNGVIDVLQNELGLDIPVAGLQKNDKHQTSELLYGASAEIVPLKKNSQAFYLLHRIQDEVHRFAITFHRQTRQKTGLKSILDDIDGIGSKRKTLLLRSFGSIKKMKEATLEDFKNIGIPENVAKNLHEQLHK</sequence>
<organism>
    <name type="scientific">Staphylococcus aureus</name>
    <dbReference type="NCBI Taxonomy" id="1280"/>
    <lineage>
        <taxon>Bacteria</taxon>
        <taxon>Bacillati</taxon>
        <taxon>Bacillota</taxon>
        <taxon>Bacilli</taxon>
        <taxon>Bacillales</taxon>
        <taxon>Staphylococcaceae</taxon>
        <taxon>Staphylococcus</taxon>
    </lineage>
</organism>
<protein>
    <recommendedName>
        <fullName evidence="1">UvrABC system protein C</fullName>
        <shortName evidence="1">Protein UvrC</shortName>
    </recommendedName>
    <alternativeName>
        <fullName evidence="1">Excinuclease ABC subunit C</fullName>
    </alternativeName>
</protein>
<accession>Q9ZEH3</accession>
<evidence type="ECO:0000255" key="1">
    <source>
        <dbReference type="HAMAP-Rule" id="MF_00203"/>
    </source>
</evidence>
<reference key="1">
    <citation type="submission" date="1998-01" db="EMBL/GenBank/DDBJ databases">
        <title>Transcriptional analysis of the thioredoxin (trxA) and thioredoxin reductase (trxB) genes in Staphylococcus aureus.</title>
        <authorList>
            <person name="Uziel O."/>
            <person name="Borovok I."/>
            <person name="Schreiber R."/>
            <person name="Cohen G."/>
            <person name="Aharonowitz Y."/>
        </authorList>
    </citation>
    <scope>NUCLEOTIDE SEQUENCE [GENOMIC DNA]</scope>
    <source>
        <strain>ATCC 9144 / DSM 683 / NCIB 6571 / NCTC 6571 / NRRL B-314 / Oxford</strain>
    </source>
</reference>
<dbReference type="EMBL" id="AJ223480">
    <property type="protein sequence ID" value="CAA11405.1"/>
    <property type="molecule type" value="Genomic_DNA"/>
</dbReference>
<dbReference type="RefSeq" id="WP_000390514.1">
    <property type="nucleotide sequence ID" value="NZ_WKIW01000014.1"/>
</dbReference>
<dbReference type="SMR" id="Q9ZEH3"/>
<dbReference type="OMA" id="HIECFDN"/>
<dbReference type="GO" id="GO:0005737">
    <property type="term" value="C:cytoplasm"/>
    <property type="evidence" value="ECO:0007669"/>
    <property type="project" value="UniProtKB-SubCell"/>
</dbReference>
<dbReference type="GO" id="GO:0009380">
    <property type="term" value="C:excinuclease repair complex"/>
    <property type="evidence" value="ECO:0007669"/>
    <property type="project" value="InterPro"/>
</dbReference>
<dbReference type="GO" id="GO:0003677">
    <property type="term" value="F:DNA binding"/>
    <property type="evidence" value="ECO:0007669"/>
    <property type="project" value="UniProtKB-UniRule"/>
</dbReference>
<dbReference type="GO" id="GO:0009381">
    <property type="term" value="F:excinuclease ABC activity"/>
    <property type="evidence" value="ECO:0007669"/>
    <property type="project" value="UniProtKB-UniRule"/>
</dbReference>
<dbReference type="GO" id="GO:0006289">
    <property type="term" value="P:nucleotide-excision repair"/>
    <property type="evidence" value="ECO:0007669"/>
    <property type="project" value="UniProtKB-UniRule"/>
</dbReference>
<dbReference type="GO" id="GO:0009432">
    <property type="term" value="P:SOS response"/>
    <property type="evidence" value="ECO:0007669"/>
    <property type="project" value="UniProtKB-UniRule"/>
</dbReference>
<dbReference type="CDD" id="cd10434">
    <property type="entry name" value="GIY-YIG_UvrC_Cho"/>
    <property type="match status" value="1"/>
</dbReference>
<dbReference type="FunFam" id="3.30.420.340:FF:000002">
    <property type="entry name" value="UvrABC system protein C"/>
    <property type="match status" value="1"/>
</dbReference>
<dbReference type="FunFam" id="3.40.1440.10:FF:000001">
    <property type="entry name" value="UvrABC system protein C"/>
    <property type="match status" value="1"/>
</dbReference>
<dbReference type="FunFam" id="4.10.860.10:FF:000007">
    <property type="entry name" value="UvrABC system protein C"/>
    <property type="match status" value="1"/>
</dbReference>
<dbReference type="Gene3D" id="1.10.150.20">
    <property type="entry name" value="5' to 3' exonuclease, C-terminal subdomain"/>
    <property type="match status" value="1"/>
</dbReference>
<dbReference type="Gene3D" id="3.40.1440.10">
    <property type="entry name" value="GIY-YIG endonuclease"/>
    <property type="match status" value="1"/>
</dbReference>
<dbReference type="Gene3D" id="4.10.860.10">
    <property type="entry name" value="UVR domain"/>
    <property type="match status" value="1"/>
</dbReference>
<dbReference type="Gene3D" id="3.30.420.340">
    <property type="entry name" value="UvrC, RNAse H endonuclease domain"/>
    <property type="match status" value="1"/>
</dbReference>
<dbReference type="HAMAP" id="MF_00203">
    <property type="entry name" value="UvrC"/>
    <property type="match status" value="1"/>
</dbReference>
<dbReference type="InterPro" id="IPR000305">
    <property type="entry name" value="GIY-YIG_endonuc"/>
</dbReference>
<dbReference type="InterPro" id="IPR035901">
    <property type="entry name" value="GIY-YIG_endonuc_sf"/>
</dbReference>
<dbReference type="InterPro" id="IPR047296">
    <property type="entry name" value="GIY-YIG_UvrC_Cho"/>
</dbReference>
<dbReference type="InterPro" id="IPR010994">
    <property type="entry name" value="RuvA_2-like"/>
</dbReference>
<dbReference type="InterPro" id="IPR001943">
    <property type="entry name" value="UVR_dom"/>
</dbReference>
<dbReference type="InterPro" id="IPR036876">
    <property type="entry name" value="UVR_dom_sf"/>
</dbReference>
<dbReference type="InterPro" id="IPR050066">
    <property type="entry name" value="UvrABC_protein_C"/>
</dbReference>
<dbReference type="InterPro" id="IPR004791">
    <property type="entry name" value="UvrC"/>
</dbReference>
<dbReference type="InterPro" id="IPR001162">
    <property type="entry name" value="UvrC_RNase_H_dom"/>
</dbReference>
<dbReference type="InterPro" id="IPR038476">
    <property type="entry name" value="UvrC_RNase_H_dom_sf"/>
</dbReference>
<dbReference type="NCBIfam" id="TIGR00194">
    <property type="entry name" value="uvrC"/>
    <property type="match status" value="1"/>
</dbReference>
<dbReference type="PANTHER" id="PTHR30562:SF1">
    <property type="entry name" value="UVRABC SYSTEM PROTEIN C"/>
    <property type="match status" value="1"/>
</dbReference>
<dbReference type="PANTHER" id="PTHR30562">
    <property type="entry name" value="UVRC/OXIDOREDUCTASE"/>
    <property type="match status" value="1"/>
</dbReference>
<dbReference type="Pfam" id="PF01541">
    <property type="entry name" value="GIY-YIG"/>
    <property type="match status" value="1"/>
</dbReference>
<dbReference type="Pfam" id="PF02151">
    <property type="entry name" value="UVR"/>
    <property type="match status" value="1"/>
</dbReference>
<dbReference type="Pfam" id="PF22920">
    <property type="entry name" value="UvrC_RNaseH"/>
    <property type="match status" value="1"/>
</dbReference>
<dbReference type="Pfam" id="PF08459">
    <property type="entry name" value="UvrC_RNaseH_dom"/>
    <property type="match status" value="1"/>
</dbReference>
<dbReference type="SMART" id="SM00465">
    <property type="entry name" value="GIYc"/>
    <property type="match status" value="1"/>
</dbReference>
<dbReference type="SUPFAM" id="SSF46600">
    <property type="entry name" value="C-terminal UvrC-binding domain of UvrB"/>
    <property type="match status" value="1"/>
</dbReference>
<dbReference type="SUPFAM" id="SSF82771">
    <property type="entry name" value="GIY-YIG endonuclease"/>
    <property type="match status" value="1"/>
</dbReference>
<dbReference type="SUPFAM" id="SSF47781">
    <property type="entry name" value="RuvA domain 2-like"/>
    <property type="match status" value="1"/>
</dbReference>
<dbReference type="PROSITE" id="PS50164">
    <property type="entry name" value="GIY_YIG"/>
    <property type="match status" value="1"/>
</dbReference>
<dbReference type="PROSITE" id="PS50151">
    <property type="entry name" value="UVR"/>
    <property type="match status" value="1"/>
</dbReference>
<dbReference type="PROSITE" id="PS50165">
    <property type="entry name" value="UVRC"/>
    <property type="match status" value="1"/>
</dbReference>
<name>UVRC_STAAU</name>
<comment type="function">
    <text evidence="1">The UvrABC repair system catalyzes the recognition and processing of DNA lesions. UvrC both incises the 5' and 3' sides of the lesion. The N-terminal half is responsible for the 3' incision and the C-terminal half is responsible for the 5' incision.</text>
</comment>
<comment type="subunit">
    <text evidence="1">Interacts with UvrB in an incision complex.</text>
</comment>
<comment type="subcellular location">
    <subcellularLocation>
        <location evidence="1">Cytoplasm</location>
    </subcellularLocation>
</comment>
<comment type="similarity">
    <text evidence="1">Belongs to the UvrC family.</text>
</comment>